<proteinExistence type="inferred from homology"/>
<accession>B5R360</accession>
<keyword id="KW-0067">ATP-binding</keyword>
<keyword id="KW-0963">Cytoplasm</keyword>
<keyword id="KW-0210">Decarboxylase</keyword>
<keyword id="KW-0312">Gluconeogenesis</keyword>
<keyword id="KW-0456">Lyase</keyword>
<keyword id="KW-0464">Manganese</keyword>
<keyword id="KW-0479">Metal-binding</keyword>
<keyword id="KW-0547">Nucleotide-binding</keyword>
<name>PCKA_SALEP</name>
<reference key="1">
    <citation type="journal article" date="2008" name="Genome Res.">
        <title>Comparative genome analysis of Salmonella enteritidis PT4 and Salmonella gallinarum 287/91 provides insights into evolutionary and host adaptation pathways.</title>
        <authorList>
            <person name="Thomson N.R."/>
            <person name="Clayton D.J."/>
            <person name="Windhorst D."/>
            <person name="Vernikos G."/>
            <person name="Davidson S."/>
            <person name="Churcher C."/>
            <person name="Quail M.A."/>
            <person name="Stevens M."/>
            <person name="Jones M.A."/>
            <person name="Watson M."/>
            <person name="Barron A."/>
            <person name="Layton A."/>
            <person name="Pickard D."/>
            <person name="Kingsley R.A."/>
            <person name="Bignell A."/>
            <person name="Clark L."/>
            <person name="Harris B."/>
            <person name="Ormond D."/>
            <person name="Abdellah Z."/>
            <person name="Brooks K."/>
            <person name="Cherevach I."/>
            <person name="Chillingworth T."/>
            <person name="Woodward J."/>
            <person name="Norberczak H."/>
            <person name="Lord A."/>
            <person name="Arrowsmith C."/>
            <person name="Jagels K."/>
            <person name="Moule S."/>
            <person name="Mungall K."/>
            <person name="Saunders M."/>
            <person name="Whitehead S."/>
            <person name="Chabalgoity J.A."/>
            <person name="Maskell D."/>
            <person name="Humphreys T."/>
            <person name="Roberts M."/>
            <person name="Barrow P.A."/>
            <person name="Dougan G."/>
            <person name="Parkhill J."/>
        </authorList>
    </citation>
    <scope>NUCLEOTIDE SEQUENCE [LARGE SCALE GENOMIC DNA]</scope>
    <source>
        <strain>P125109</strain>
    </source>
</reference>
<organism>
    <name type="scientific">Salmonella enteritidis PT4 (strain P125109)</name>
    <dbReference type="NCBI Taxonomy" id="550537"/>
    <lineage>
        <taxon>Bacteria</taxon>
        <taxon>Pseudomonadati</taxon>
        <taxon>Pseudomonadota</taxon>
        <taxon>Gammaproteobacteria</taxon>
        <taxon>Enterobacterales</taxon>
        <taxon>Enterobacteriaceae</taxon>
        <taxon>Salmonella</taxon>
    </lineage>
</organism>
<comment type="function">
    <text evidence="1">Involved in the gluconeogenesis. Catalyzes the conversion of oxaloacetate (OAA) to phosphoenolpyruvate (PEP) through direct phosphoryl transfer between the nucleoside triphosphate and OAA.</text>
</comment>
<comment type="catalytic activity">
    <reaction evidence="1">
        <text>oxaloacetate + ATP = phosphoenolpyruvate + ADP + CO2</text>
        <dbReference type="Rhea" id="RHEA:18617"/>
        <dbReference type="ChEBI" id="CHEBI:16452"/>
        <dbReference type="ChEBI" id="CHEBI:16526"/>
        <dbReference type="ChEBI" id="CHEBI:30616"/>
        <dbReference type="ChEBI" id="CHEBI:58702"/>
        <dbReference type="ChEBI" id="CHEBI:456216"/>
        <dbReference type="EC" id="4.1.1.49"/>
    </reaction>
</comment>
<comment type="cofactor">
    <cofactor evidence="1">
        <name>Mn(2+)</name>
        <dbReference type="ChEBI" id="CHEBI:29035"/>
    </cofactor>
    <text evidence="1">Binds 1 Mn(2+) ion per subunit.</text>
</comment>
<comment type="pathway">
    <text evidence="1">Carbohydrate biosynthesis; gluconeogenesis.</text>
</comment>
<comment type="subunit">
    <text evidence="1">Monomer.</text>
</comment>
<comment type="subcellular location">
    <subcellularLocation>
        <location evidence="1">Cytoplasm</location>
    </subcellularLocation>
</comment>
<comment type="similarity">
    <text evidence="1">Belongs to the phosphoenolpyruvate carboxykinase (ATP) family.</text>
</comment>
<feature type="chain" id="PRO_1000192325" description="Phosphoenolpyruvate carboxykinase (ATP)">
    <location>
        <begin position="1"/>
        <end position="539"/>
    </location>
</feature>
<feature type="binding site" evidence="1">
    <location>
        <position position="64"/>
    </location>
    <ligand>
        <name>substrate</name>
    </ligand>
</feature>
<feature type="binding site" evidence="1">
    <location>
        <position position="206"/>
    </location>
    <ligand>
        <name>substrate</name>
    </ligand>
</feature>
<feature type="binding site" evidence="1">
    <location>
        <position position="212"/>
    </location>
    <ligand>
        <name>ATP</name>
        <dbReference type="ChEBI" id="CHEBI:30616"/>
    </ligand>
</feature>
<feature type="binding site" evidence="1">
    <location>
        <position position="212"/>
    </location>
    <ligand>
        <name>Mn(2+)</name>
        <dbReference type="ChEBI" id="CHEBI:29035"/>
    </ligand>
</feature>
<feature type="binding site" evidence="1">
    <location>
        <position position="212"/>
    </location>
    <ligand>
        <name>substrate</name>
    </ligand>
</feature>
<feature type="binding site" evidence="1">
    <location>
        <position position="231"/>
    </location>
    <ligand>
        <name>ATP</name>
        <dbReference type="ChEBI" id="CHEBI:30616"/>
    </ligand>
</feature>
<feature type="binding site" evidence="1">
    <location>
        <position position="231"/>
    </location>
    <ligand>
        <name>Mn(2+)</name>
        <dbReference type="ChEBI" id="CHEBI:29035"/>
    </ligand>
</feature>
<feature type="binding site" evidence="1">
    <location>
        <begin position="247"/>
        <end position="255"/>
    </location>
    <ligand>
        <name>ATP</name>
        <dbReference type="ChEBI" id="CHEBI:30616"/>
    </ligand>
</feature>
<feature type="binding site" evidence="1">
    <location>
        <position position="268"/>
    </location>
    <ligand>
        <name>Mn(2+)</name>
        <dbReference type="ChEBI" id="CHEBI:29035"/>
    </ligand>
</feature>
<feature type="binding site" evidence="1">
    <location>
        <position position="296"/>
    </location>
    <ligand>
        <name>ATP</name>
        <dbReference type="ChEBI" id="CHEBI:30616"/>
    </ligand>
</feature>
<feature type="binding site" evidence="1">
    <location>
        <position position="332"/>
    </location>
    <ligand>
        <name>ATP</name>
        <dbReference type="ChEBI" id="CHEBI:30616"/>
    </ligand>
</feature>
<feature type="binding site" evidence="1">
    <location>
        <position position="332"/>
    </location>
    <ligand>
        <name>substrate</name>
    </ligand>
</feature>
<feature type="binding site" evidence="1">
    <location>
        <begin position="448"/>
        <end position="449"/>
    </location>
    <ligand>
        <name>ATP</name>
        <dbReference type="ChEBI" id="CHEBI:30616"/>
    </ligand>
</feature>
<feature type="binding site" evidence="1">
    <location>
        <position position="454"/>
    </location>
    <ligand>
        <name>ATP</name>
        <dbReference type="ChEBI" id="CHEBI:30616"/>
    </ligand>
</feature>
<evidence type="ECO:0000255" key="1">
    <source>
        <dbReference type="HAMAP-Rule" id="MF_00453"/>
    </source>
</evidence>
<sequence>MRVNNLTPQDLKAYGINDVQDIVYNPSYDTLYQEELNPGLEGYERGVLTNLGAVAVDTGIFTGRSPKDKYIVRDDTTRDTLWWSDKGKGKNDNKPLSQETWQHLKGLVTHQLSGKRLFIVDAFCGANADTRLSVRFITEVAWQAHFVKNMFIRPTDEELVGFKPDFIVMNGAKCTNPQWKEQGLNSENFVAFNLTERIQLIGGTWYGGEMKKGMFSVMNYLLPLKGIASMHCSANVGEKGDVAVFFGLSGTGKTTLSTDPKRRLIGDDEHGWDDDGVFNFEGGCYAKTIKLSKEAEPEIYHAIRRDALLENVTVREDGTVDFDDGSKTENTRVSYPIYHIDNIVKPVSKAGHATKVIFLTADAFGVLPPVSRLTANQTQYHFLSGFTAKLAGTERGVTEPTPTFSACFGAAFLTLHPTQYAEVLVKRMQAAGAQAYLVNTGWNGTGKRISIKDTRAIIDAILNGSLDNAETFRLPLFDLAIPTELPGVDTHILDPRNTYASPEQWQEKATALAKLFIENFEKYTDTPAGEALVSAGPKL</sequence>
<gene>
    <name evidence="1" type="primary">pckA</name>
    <name type="ordered locus">SEN3326</name>
</gene>
<dbReference type="EC" id="4.1.1.49" evidence="1"/>
<dbReference type="EMBL" id="AM933172">
    <property type="protein sequence ID" value="CAR34901.1"/>
    <property type="molecule type" value="Genomic_DNA"/>
</dbReference>
<dbReference type="RefSeq" id="WP_001265689.1">
    <property type="nucleotide sequence ID" value="NC_011294.1"/>
</dbReference>
<dbReference type="SMR" id="B5R360"/>
<dbReference type="KEGG" id="set:SEN3326"/>
<dbReference type="HOGENOM" id="CLU_018247_0_1_6"/>
<dbReference type="UniPathway" id="UPA00138"/>
<dbReference type="Proteomes" id="UP000000613">
    <property type="component" value="Chromosome"/>
</dbReference>
<dbReference type="GO" id="GO:0005829">
    <property type="term" value="C:cytosol"/>
    <property type="evidence" value="ECO:0007669"/>
    <property type="project" value="TreeGrafter"/>
</dbReference>
<dbReference type="GO" id="GO:0005524">
    <property type="term" value="F:ATP binding"/>
    <property type="evidence" value="ECO:0007669"/>
    <property type="project" value="UniProtKB-UniRule"/>
</dbReference>
<dbReference type="GO" id="GO:0046872">
    <property type="term" value="F:metal ion binding"/>
    <property type="evidence" value="ECO:0007669"/>
    <property type="project" value="UniProtKB-KW"/>
</dbReference>
<dbReference type="GO" id="GO:0004612">
    <property type="term" value="F:phosphoenolpyruvate carboxykinase (ATP) activity"/>
    <property type="evidence" value="ECO:0007669"/>
    <property type="project" value="UniProtKB-UniRule"/>
</dbReference>
<dbReference type="GO" id="GO:0006094">
    <property type="term" value="P:gluconeogenesis"/>
    <property type="evidence" value="ECO:0007669"/>
    <property type="project" value="UniProtKB-UniRule"/>
</dbReference>
<dbReference type="CDD" id="cd00484">
    <property type="entry name" value="PEPCK_ATP"/>
    <property type="match status" value="1"/>
</dbReference>
<dbReference type="FunFam" id="2.170.8.10:FF:000001">
    <property type="entry name" value="Phosphoenolpyruvate carboxykinase (ATP)"/>
    <property type="match status" value="1"/>
</dbReference>
<dbReference type="FunFam" id="3.40.449.10:FF:000001">
    <property type="entry name" value="Phosphoenolpyruvate carboxykinase (ATP)"/>
    <property type="match status" value="1"/>
</dbReference>
<dbReference type="Gene3D" id="3.90.228.20">
    <property type="match status" value="1"/>
</dbReference>
<dbReference type="Gene3D" id="3.40.449.10">
    <property type="entry name" value="Phosphoenolpyruvate Carboxykinase, domain 1"/>
    <property type="match status" value="1"/>
</dbReference>
<dbReference type="Gene3D" id="2.170.8.10">
    <property type="entry name" value="Phosphoenolpyruvate Carboxykinase, domain 2"/>
    <property type="match status" value="1"/>
</dbReference>
<dbReference type="HAMAP" id="MF_00453">
    <property type="entry name" value="PEPCK_ATP"/>
    <property type="match status" value="1"/>
</dbReference>
<dbReference type="InterPro" id="IPR001272">
    <property type="entry name" value="PEP_carboxykinase_ATP"/>
</dbReference>
<dbReference type="InterPro" id="IPR013035">
    <property type="entry name" value="PEP_carboxykinase_C"/>
</dbReference>
<dbReference type="InterPro" id="IPR008210">
    <property type="entry name" value="PEP_carboxykinase_N"/>
</dbReference>
<dbReference type="InterPro" id="IPR015994">
    <property type="entry name" value="PEPCK_ATP_CS"/>
</dbReference>
<dbReference type="NCBIfam" id="TIGR00224">
    <property type="entry name" value="pckA"/>
    <property type="match status" value="1"/>
</dbReference>
<dbReference type="NCBIfam" id="NF006819">
    <property type="entry name" value="PRK09344.1-1"/>
    <property type="match status" value="1"/>
</dbReference>
<dbReference type="NCBIfam" id="NF006820">
    <property type="entry name" value="PRK09344.1-2"/>
    <property type="match status" value="1"/>
</dbReference>
<dbReference type="NCBIfam" id="NF006821">
    <property type="entry name" value="PRK09344.1-3"/>
    <property type="match status" value="1"/>
</dbReference>
<dbReference type="PANTHER" id="PTHR30031:SF0">
    <property type="entry name" value="PHOSPHOENOLPYRUVATE CARBOXYKINASE (ATP)"/>
    <property type="match status" value="1"/>
</dbReference>
<dbReference type="PANTHER" id="PTHR30031">
    <property type="entry name" value="PHOSPHOENOLPYRUVATE CARBOXYKINASE ATP"/>
    <property type="match status" value="1"/>
</dbReference>
<dbReference type="Pfam" id="PF01293">
    <property type="entry name" value="PEPCK_ATP"/>
    <property type="match status" value="1"/>
</dbReference>
<dbReference type="PIRSF" id="PIRSF006294">
    <property type="entry name" value="PEP_crbxkin"/>
    <property type="match status" value="1"/>
</dbReference>
<dbReference type="SUPFAM" id="SSF68923">
    <property type="entry name" value="PEP carboxykinase N-terminal domain"/>
    <property type="match status" value="1"/>
</dbReference>
<dbReference type="SUPFAM" id="SSF53795">
    <property type="entry name" value="PEP carboxykinase-like"/>
    <property type="match status" value="1"/>
</dbReference>
<dbReference type="PROSITE" id="PS00532">
    <property type="entry name" value="PEPCK_ATP"/>
    <property type="match status" value="1"/>
</dbReference>
<protein>
    <recommendedName>
        <fullName evidence="1">Phosphoenolpyruvate carboxykinase (ATP)</fullName>
        <shortName evidence="1">PCK</shortName>
        <shortName evidence="1">PEP carboxykinase</shortName>
        <shortName evidence="1">PEPCK</shortName>
        <ecNumber evidence="1">4.1.1.49</ecNumber>
    </recommendedName>
</protein>